<accession>Q91XS8</accession>
<dbReference type="EC" id="2.7.11.1"/>
<dbReference type="EMBL" id="AB070349">
    <property type="protein sequence ID" value="BAB63368.1"/>
    <property type="molecule type" value="mRNA"/>
</dbReference>
<dbReference type="PIR" id="JC7733">
    <property type="entry name" value="JC7733"/>
</dbReference>
<dbReference type="RefSeq" id="NP_596883.1">
    <property type="nucleotide sequence ID" value="NM_133392.1"/>
</dbReference>
<dbReference type="RefSeq" id="XP_006244970.1">
    <property type="nucleotide sequence ID" value="XM_006244908.4"/>
</dbReference>
<dbReference type="RefSeq" id="XP_038938918.1">
    <property type="nucleotide sequence ID" value="XM_039082990.2"/>
</dbReference>
<dbReference type="SMR" id="Q91XS8"/>
<dbReference type="FunCoup" id="Q91XS8">
    <property type="interactions" value="1444"/>
</dbReference>
<dbReference type="IntAct" id="Q91XS8">
    <property type="interactions" value="2"/>
</dbReference>
<dbReference type="STRING" id="10116.ENSRNOP00000016857"/>
<dbReference type="iPTMnet" id="Q91XS8"/>
<dbReference type="PhosphoSitePlus" id="Q91XS8"/>
<dbReference type="PaxDb" id="10116-ENSRNOP00000016857"/>
<dbReference type="Ensembl" id="ENSRNOT00000016856.5">
    <property type="protein sequence ID" value="ENSRNOP00000016857.1"/>
    <property type="gene ID" value="ENSRNOG00000012502.5"/>
</dbReference>
<dbReference type="GeneID" id="170904"/>
<dbReference type="KEGG" id="rno:170904"/>
<dbReference type="UCSC" id="RGD:620457">
    <property type="organism name" value="rat"/>
</dbReference>
<dbReference type="AGR" id="RGD:620457"/>
<dbReference type="CTD" id="9262"/>
<dbReference type="RGD" id="620457">
    <property type="gene designation" value="Stk17b"/>
</dbReference>
<dbReference type="eggNOG" id="KOG0032">
    <property type="taxonomic scope" value="Eukaryota"/>
</dbReference>
<dbReference type="GeneTree" id="ENSGT00940000154014"/>
<dbReference type="HOGENOM" id="CLU_000288_63_0_1"/>
<dbReference type="InParanoid" id="Q91XS8"/>
<dbReference type="OMA" id="LSHPWLW"/>
<dbReference type="OrthoDB" id="504170at2759"/>
<dbReference type="PhylomeDB" id="Q91XS8"/>
<dbReference type="TreeFam" id="TF314166"/>
<dbReference type="PRO" id="PR:Q91XS8"/>
<dbReference type="Proteomes" id="UP000002494">
    <property type="component" value="Chromosome 9"/>
</dbReference>
<dbReference type="Bgee" id="ENSRNOG00000012502">
    <property type="expression patterns" value="Expressed in thymus and 20 other cell types or tissues"/>
</dbReference>
<dbReference type="GO" id="GO:0015629">
    <property type="term" value="C:actin cytoskeleton"/>
    <property type="evidence" value="ECO:0000315"/>
    <property type="project" value="UniProtKB"/>
</dbReference>
<dbReference type="GO" id="GO:0005793">
    <property type="term" value="C:endoplasmic reticulum-Golgi intermediate compartment"/>
    <property type="evidence" value="ECO:0007669"/>
    <property type="project" value="UniProtKB-SubCell"/>
</dbReference>
<dbReference type="GO" id="GO:0090543">
    <property type="term" value="C:Flemming body"/>
    <property type="evidence" value="ECO:0007669"/>
    <property type="project" value="Ensembl"/>
</dbReference>
<dbReference type="GO" id="GO:0005654">
    <property type="term" value="C:nucleoplasm"/>
    <property type="evidence" value="ECO:0007669"/>
    <property type="project" value="Ensembl"/>
</dbReference>
<dbReference type="GO" id="GO:0005634">
    <property type="term" value="C:nucleus"/>
    <property type="evidence" value="ECO:0000314"/>
    <property type="project" value="UniProtKB"/>
</dbReference>
<dbReference type="GO" id="GO:0005886">
    <property type="term" value="C:plasma membrane"/>
    <property type="evidence" value="ECO:0007669"/>
    <property type="project" value="UniProtKB-SubCell"/>
</dbReference>
<dbReference type="GO" id="GO:0005524">
    <property type="term" value="F:ATP binding"/>
    <property type="evidence" value="ECO:0000314"/>
    <property type="project" value="UniProtKB"/>
</dbReference>
<dbReference type="GO" id="GO:0004672">
    <property type="term" value="F:protein kinase activity"/>
    <property type="evidence" value="ECO:0000314"/>
    <property type="project" value="UniProtKB"/>
</dbReference>
<dbReference type="GO" id="GO:0106310">
    <property type="term" value="F:protein serine kinase activity"/>
    <property type="evidence" value="ECO:0007669"/>
    <property type="project" value="RHEA"/>
</dbReference>
<dbReference type="GO" id="GO:0004674">
    <property type="term" value="F:protein serine/threonine kinase activity"/>
    <property type="evidence" value="ECO:0000314"/>
    <property type="project" value="UniProtKB"/>
</dbReference>
<dbReference type="GO" id="GO:0006915">
    <property type="term" value="P:apoptotic process"/>
    <property type="evidence" value="ECO:0000315"/>
    <property type="project" value="UniProtKB"/>
</dbReference>
<dbReference type="GO" id="GO:0035556">
    <property type="term" value="P:intracellular signal transduction"/>
    <property type="evidence" value="ECO:0000314"/>
    <property type="project" value="UniProtKB"/>
</dbReference>
<dbReference type="GO" id="GO:0043065">
    <property type="term" value="P:positive regulation of apoptotic process"/>
    <property type="evidence" value="ECO:0000318"/>
    <property type="project" value="GO_Central"/>
</dbReference>
<dbReference type="GO" id="GO:2000271">
    <property type="term" value="P:positive regulation of fibroblast apoptotic process"/>
    <property type="evidence" value="ECO:0000250"/>
    <property type="project" value="UniProtKB"/>
</dbReference>
<dbReference type="GO" id="GO:0012501">
    <property type="term" value="P:programmed cell death"/>
    <property type="evidence" value="ECO:0000314"/>
    <property type="project" value="RGD"/>
</dbReference>
<dbReference type="GO" id="GO:0046777">
    <property type="term" value="P:protein autophosphorylation"/>
    <property type="evidence" value="ECO:0000314"/>
    <property type="project" value="UniProtKB"/>
</dbReference>
<dbReference type="GO" id="GO:0006468">
    <property type="term" value="P:protein phosphorylation"/>
    <property type="evidence" value="ECO:0000314"/>
    <property type="project" value="UniProtKB"/>
</dbReference>
<dbReference type="CDD" id="cd14198">
    <property type="entry name" value="STKc_DRAK2"/>
    <property type="match status" value="1"/>
</dbReference>
<dbReference type="FunFam" id="3.30.200.20:FF:000175">
    <property type="entry name" value="Serine/threonine-protein kinase 17B"/>
    <property type="match status" value="1"/>
</dbReference>
<dbReference type="FunFam" id="1.10.510.10:FF:000422">
    <property type="entry name" value="serine/threonine-protein kinase 17B"/>
    <property type="match status" value="1"/>
</dbReference>
<dbReference type="Gene3D" id="3.30.200.20">
    <property type="entry name" value="Phosphorylase Kinase, domain 1"/>
    <property type="match status" value="1"/>
</dbReference>
<dbReference type="Gene3D" id="1.10.510.10">
    <property type="entry name" value="Transferase(Phosphotransferase) domain 1"/>
    <property type="match status" value="1"/>
</dbReference>
<dbReference type="InterPro" id="IPR011009">
    <property type="entry name" value="Kinase-like_dom_sf"/>
</dbReference>
<dbReference type="InterPro" id="IPR000719">
    <property type="entry name" value="Prot_kinase_dom"/>
</dbReference>
<dbReference type="InterPro" id="IPR017441">
    <property type="entry name" value="Protein_kinase_ATP_BS"/>
</dbReference>
<dbReference type="InterPro" id="IPR008271">
    <property type="entry name" value="Ser/Thr_kinase_AS"/>
</dbReference>
<dbReference type="InterPro" id="IPR042763">
    <property type="entry name" value="ST17B_STKc"/>
</dbReference>
<dbReference type="PANTHER" id="PTHR24342">
    <property type="entry name" value="SERINE/THREONINE-PROTEIN KINASE 17"/>
    <property type="match status" value="1"/>
</dbReference>
<dbReference type="PANTHER" id="PTHR24342:SF5">
    <property type="entry name" value="SERINE_THREONINE-PROTEIN KINASE 17B"/>
    <property type="match status" value="1"/>
</dbReference>
<dbReference type="Pfam" id="PF00069">
    <property type="entry name" value="Pkinase"/>
    <property type="match status" value="1"/>
</dbReference>
<dbReference type="SMART" id="SM00220">
    <property type="entry name" value="S_TKc"/>
    <property type="match status" value="1"/>
</dbReference>
<dbReference type="SUPFAM" id="SSF56112">
    <property type="entry name" value="Protein kinase-like (PK-like)"/>
    <property type="match status" value="1"/>
</dbReference>
<dbReference type="PROSITE" id="PS00107">
    <property type="entry name" value="PROTEIN_KINASE_ATP"/>
    <property type="match status" value="1"/>
</dbReference>
<dbReference type="PROSITE" id="PS50011">
    <property type="entry name" value="PROTEIN_KINASE_DOM"/>
    <property type="match status" value="1"/>
</dbReference>
<dbReference type="PROSITE" id="PS00108">
    <property type="entry name" value="PROTEIN_KINASE_ST"/>
    <property type="match status" value="1"/>
</dbReference>
<reference evidence="6" key="1">
    <citation type="journal article" date="2001" name="J. Biochem.">
        <title>A serine/threonine kinase which causes apoptosis-like cell death interacts with a calcineurin B-like protein capable of binding Na+/H+ exchanger.</title>
        <authorList>
            <person name="Matsumoto M."/>
            <person name="Miyake Y."/>
            <person name="Nagita M."/>
            <person name="Inoue H."/>
            <person name="Shitakubo D."/>
            <person name="Takemoto K."/>
            <person name="Ohtsuka C."/>
            <person name="Murakami H."/>
            <person name="Nakamura N."/>
            <person name="Kanazawa H."/>
        </authorList>
    </citation>
    <scope>NUCLEOTIDE SEQUENCE [MRNA]</scope>
    <scope>FUNCTION</scope>
    <scope>INTERACTION WITH CHP1</scope>
    <scope>TISSUE SPECIFICITY</scope>
    <scope>SUBCELLULAR LOCATION</scope>
    <scope>MUTAGENESIS OF LYS-62</scope>
    <source>
        <tissue evidence="7">Brain</tissue>
    </source>
</reference>
<reference key="2">
    <citation type="journal article" date="2003" name="J. Biochem.">
        <title>The apoptosis-inducing protein kinase DRAK2 is inhibited in a calcium-dependent manner by the calcium-binding protein CHP.</title>
        <authorList>
            <person name="Kuwahara H."/>
            <person name="Kamei J."/>
            <person name="Nakamura N."/>
            <person name="Matsumoto M."/>
            <person name="Inoue H."/>
            <person name="Kanazawa H."/>
        </authorList>
    </citation>
    <scope>FUNCTION AS A MYOSIN LIGHT CHAIN KINASE</scope>
    <scope>AUTOPHOSPHORYLATION</scope>
    <scope>MUTAGENESIS OF LYS-62</scope>
</reference>
<comment type="function">
    <text evidence="4 5">Acts as a positive regulator of apoptosis. Phosphorylates myosin light chains.</text>
</comment>
<comment type="catalytic activity">
    <reaction evidence="4">
        <text>L-seryl-[protein] + ATP = O-phospho-L-seryl-[protein] + ADP + H(+)</text>
        <dbReference type="Rhea" id="RHEA:17989"/>
        <dbReference type="Rhea" id="RHEA-COMP:9863"/>
        <dbReference type="Rhea" id="RHEA-COMP:11604"/>
        <dbReference type="ChEBI" id="CHEBI:15378"/>
        <dbReference type="ChEBI" id="CHEBI:29999"/>
        <dbReference type="ChEBI" id="CHEBI:30616"/>
        <dbReference type="ChEBI" id="CHEBI:83421"/>
        <dbReference type="ChEBI" id="CHEBI:456216"/>
        <dbReference type="EC" id="2.7.11.1"/>
    </reaction>
</comment>
<comment type="catalytic activity">
    <reaction evidence="4">
        <text>L-threonyl-[protein] + ATP = O-phospho-L-threonyl-[protein] + ADP + H(+)</text>
        <dbReference type="Rhea" id="RHEA:46608"/>
        <dbReference type="Rhea" id="RHEA-COMP:11060"/>
        <dbReference type="Rhea" id="RHEA-COMP:11605"/>
        <dbReference type="ChEBI" id="CHEBI:15378"/>
        <dbReference type="ChEBI" id="CHEBI:30013"/>
        <dbReference type="ChEBI" id="CHEBI:30616"/>
        <dbReference type="ChEBI" id="CHEBI:61977"/>
        <dbReference type="ChEBI" id="CHEBI:456216"/>
        <dbReference type="EC" id="2.7.11.1"/>
    </reaction>
</comment>
<comment type="subunit">
    <text evidence="4">Interacts with CHP1; the interaction induces CHP1 to translocate from the Golgi to the nucleus.</text>
</comment>
<comment type="interaction">
    <interactant intactId="EBI-77460">
        <id>Q91XS8</id>
    </interactant>
    <interactant intactId="EBI-917838">
        <id>P61023</id>
        <label>Chp1</label>
    </interactant>
    <organismsDiffer>false</organismsDiffer>
    <experiments>6</experiments>
</comment>
<comment type="interaction">
    <interactant intactId="EBI-77460">
        <id>Q91XS8</id>
    </interactant>
    <interactant intactId="EBI-77480">
        <id>Q9Z1Y0</id>
        <label>Rhov</label>
    </interactant>
    <organismsDiffer>false</organismsDiffer>
    <experiments>2</experiments>
</comment>
<comment type="subcellular location">
    <subcellularLocation>
        <location evidence="4">Nucleus</location>
    </subcellularLocation>
    <subcellularLocation>
        <location evidence="4">Cell membrane</location>
    </subcellularLocation>
    <subcellularLocation>
        <location evidence="4">Endoplasmic reticulum-Golgi intermediate compartment</location>
    </subcellularLocation>
    <text>Colocalizes with STK17B at the plasma membrane.</text>
</comment>
<comment type="tissue specificity">
    <text evidence="4">Highly expressed in thymus, spleen, and testis, lower levels present in the brain.</text>
</comment>
<comment type="PTM">
    <text>Autophosphorylated.</text>
</comment>
<comment type="similarity">
    <text evidence="6">Belongs to the protein kinase superfamily. CAMK Ser/Thr protein kinase family. DAP kinase subfamily.</text>
</comment>
<name>ST17B_RAT</name>
<proteinExistence type="evidence at protein level"/>
<feature type="chain" id="PRO_0000086708" description="Serine/threonine-protein kinase 17B">
    <location>
        <begin position="1"/>
        <end position="371"/>
    </location>
</feature>
<feature type="domain" description="Protein kinase" evidence="1">
    <location>
        <begin position="33"/>
        <end position="293"/>
    </location>
</feature>
<feature type="region of interest" description="Disordered" evidence="3">
    <location>
        <begin position="308"/>
        <end position="345"/>
    </location>
</feature>
<feature type="compositionally biased region" description="Polar residues" evidence="3">
    <location>
        <begin position="309"/>
        <end position="319"/>
    </location>
</feature>
<feature type="active site" description="Proton acceptor" evidence="1 2">
    <location>
        <position position="158"/>
    </location>
</feature>
<feature type="binding site" evidence="1">
    <location>
        <begin position="39"/>
        <end position="47"/>
    </location>
    <ligand>
        <name>ATP</name>
        <dbReference type="ChEBI" id="CHEBI:30616"/>
    </ligand>
</feature>
<feature type="binding site" evidence="1">
    <location>
        <position position="62"/>
    </location>
    <ligand>
        <name>ATP</name>
        <dbReference type="ChEBI" id="CHEBI:30616"/>
    </ligand>
</feature>
<feature type="mutagenesis site" description="Inhibits kinase activity." evidence="4 5">
    <original>K</original>
    <variation>A</variation>
    <location>
        <position position="62"/>
    </location>
</feature>
<organism evidence="7">
    <name type="scientific">Rattus norvegicus</name>
    <name type="common">Rat</name>
    <dbReference type="NCBI Taxonomy" id="10116"/>
    <lineage>
        <taxon>Eukaryota</taxon>
        <taxon>Metazoa</taxon>
        <taxon>Chordata</taxon>
        <taxon>Craniata</taxon>
        <taxon>Vertebrata</taxon>
        <taxon>Euteleostomi</taxon>
        <taxon>Mammalia</taxon>
        <taxon>Eutheria</taxon>
        <taxon>Euarchontoglires</taxon>
        <taxon>Glires</taxon>
        <taxon>Rodentia</taxon>
        <taxon>Myomorpha</taxon>
        <taxon>Muroidea</taxon>
        <taxon>Muridae</taxon>
        <taxon>Murinae</taxon>
        <taxon>Rattus</taxon>
    </lineage>
</organism>
<sequence length="371" mass="42133">MSRRRFDCRSISGLLTTTPQTPMKTENFNNFYTLTPKELGRGKFAVVRQCISKSTGQEYAAKFLKKRRRGQDCRAEILHEIAVLELARSCPHVINLHEVYETATEIILVLEYAAGGEIFNLCLPELAEMVSENDVIRLIKQILEGVHYLHQNNIVHLDLKPQNILLSSIYPLGDIKIVDFGMSRKIGNASELREIMGTPEYLAPEILNYDPITTATDMWNIGIIAYMLLTHTSPFVGEDNQETYLNISQVNVDYSEEMFSSVSQLATDFIQSLLVKNPEKRPTAESCLSHSWLQQWDFGSLFHPEETSESSQTQDLSLRSSEDKTPKSCNGSCGDREDKENIPEDDSLLSKRFRFDDSLPSPHELVPDLFC</sequence>
<keyword id="KW-0053">Apoptosis</keyword>
<keyword id="KW-0067">ATP-binding</keyword>
<keyword id="KW-1003">Cell membrane</keyword>
<keyword id="KW-0418">Kinase</keyword>
<keyword id="KW-0472">Membrane</keyword>
<keyword id="KW-0547">Nucleotide-binding</keyword>
<keyword id="KW-0539">Nucleus</keyword>
<keyword id="KW-0597">Phosphoprotein</keyword>
<keyword id="KW-1185">Reference proteome</keyword>
<keyword id="KW-0723">Serine/threonine-protein kinase</keyword>
<keyword id="KW-0808">Transferase</keyword>
<gene>
    <name type="primary">Stk17b</name>
    <name type="synonym">Drak2</name>
</gene>
<evidence type="ECO:0000255" key="1">
    <source>
        <dbReference type="PROSITE-ProRule" id="PRU00159"/>
    </source>
</evidence>
<evidence type="ECO:0000255" key="2">
    <source>
        <dbReference type="PROSITE-ProRule" id="PRU10027"/>
    </source>
</evidence>
<evidence type="ECO:0000256" key="3">
    <source>
        <dbReference type="SAM" id="MobiDB-lite"/>
    </source>
</evidence>
<evidence type="ECO:0000269" key="4">
    <source>
    </source>
</evidence>
<evidence type="ECO:0000269" key="5">
    <source>
    </source>
</evidence>
<evidence type="ECO:0000305" key="6"/>
<evidence type="ECO:0000312" key="7">
    <source>
        <dbReference type="EMBL" id="BAB63368.1"/>
    </source>
</evidence>
<protein>
    <recommendedName>
        <fullName>Serine/threonine-protein kinase 17B</fullName>
        <ecNumber>2.7.11.1</ecNumber>
    </recommendedName>
    <alternativeName>
        <fullName>DAP kinase-related apoptosis-inducing protein kinase 2</fullName>
    </alternativeName>
</protein>